<gene>
    <name evidence="1" type="primary">rbsA1</name>
    <name type="ordered locus">mll1680</name>
</gene>
<proteinExistence type="inferred from homology"/>
<dbReference type="EC" id="7.5.2.7" evidence="1"/>
<dbReference type="EMBL" id="BA000012">
    <property type="protein sequence ID" value="BAB48999.1"/>
    <property type="molecule type" value="Genomic_DNA"/>
</dbReference>
<dbReference type="RefSeq" id="WP_010910352.1">
    <property type="nucleotide sequence ID" value="NC_002678.2"/>
</dbReference>
<dbReference type="SMR" id="Q98K15"/>
<dbReference type="KEGG" id="mlo:mll1680"/>
<dbReference type="eggNOG" id="COG1129">
    <property type="taxonomic scope" value="Bacteria"/>
</dbReference>
<dbReference type="HOGENOM" id="CLU_000604_92_2_5"/>
<dbReference type="Proteomes" id="UP000000552">
    <property type="component" value="Chromosome"/>
</dbReference>
<dbReference type="GO" id="GO:0005886">
    <property type="term" value="C:plasma membrane"/>
    <property type="evidence" value="ECO:0007669"/>
    <property type="project" value="UniProtKB-SubCell"/>
</dbReference>
<dbReference type="GO" id="GO:0015611">
    <property type="term" value="F:ABC-type D-ribose transporter activity"/>
    <property type="evidence" value="ECO:0007669"/>
    <property type="project" value="UniProtKB-EC"/>
</dbReference>
<dbReference type="GO" id="GO:0005524">
    <property type="term" value="F:ATP binding"/>
    <property type="evidence" value="ECO:0007669"/>
    <property type="project" value="UniProtKB-KW"/>
</dbReference>
<dbReference type="GO" id="GO:0016887">
    <property type="term" value="F:ATP hydrolysis activity"/>
    <property type="evidence" value="ECO:0007669"/>
    <property type="project" value="InterPro"/>
</dbReference>
<dbReference type="CDD" id="cd03216">
    <property type="entry name" value="ABC_Carb_Monos_I"/>
    <property type="match status" value="1"/>
</dbReference>
<dbReference type="CDD" id="cd03215">
    <property type="entry name" value="ABC_Carb_Monos_II"/>
    <property type="match status" value="1"/>
</dbReference>
<dbReference type="FunFam" id="3.40.50.300:FF:000127">
    <property type="entry name" value="Ribose import ATP-binding protein RbsA"/>
    <property type="match status" value="1"/>
</dbReference>
<dbReference type="Gene3D" id="3.40.50.300">
    <property type="entry name" value="P-loop containing nucleotide triphosphate hydrolases"/>
    <property type="match status" value="2"/>
</dbReference>
<dbReference type="InterPro" id="IPR003593">
    <property type="entry name" value="AAA+_ATPase"/>
</dbReference>
<dbReference type="InterPro" id="IPR050107">
    <property type="entry name" value="ABC_carbohydrate_import_ATPase"/>
</dbReference>
<dbReference type="InterPro" id="IPR003439">
    <property type="entry name" value="ABC_transporter-like_ATP-bd"/>
</dbReference>
<dbReference type="InterPro" id="IPR017871">
    <property type="entry name" value="ABC_transporter-like_CS"/>
</dbReference>
<dbReference type="InterPro" id="IPR027417">
    <property type="entry name" value="P-loop_NTPase"/>
</dbReference>
<dbReference type="PANTHER" id="PTHR43790">
    <property type="entry name" value="CARBOHYDRATE TRANSPORT ATP-BINDING PROTEIN MG119-RELATED"/>
    <property type="match status" value="1"/>
</dbReference>
<dbReference type="PANTHER" id="PTHR43790:SF9">
    <property type="entry name" value="GALACTOFURANOSE TRANSPORTER ATP-BINDING PROTEIN YTFR"/>
    <property type="match status" value="1"/>
</dbReference>
<dbReference type="Pfam" id="PF00005">
    <property type="entry name" value="ABC_tran"/>
    <property type="match status" value="2"/>
</dbReference>
<dbReference type="SMART" id="SM00382">
    <property type="entry name" value="AAA"/>
    <property type="match status" value="1"/>
</dbReference>
<dbReference type="SUPFAM" id="SSF52540">
    <property type="entry name" value="P-loop containing nucleoside triphosphate hydrolases"/>
    <property type="match status" value="2"/>
</dbReference>
<dbReference type="PROSITE" id="PS00211">
    <property type="entry name" value="ABC_TRANSPORTER_1"/>
    <property type="match status" value="1"/>
</dbReference>
<dbReference type="PROSITE" id="PS50893">
    <property type="entry name" value="ABC_TRANSPORTER_2"/>
    <property type="match status" value="2"/>
</dbReference>
<dbReference type="PROSITE" id="PS51254">
    <property type="entry name" value="RBSA"/>
    <property type="match status" value="1"/>
</dbReference>
<feature type="chain" id="PRO_0000261086" description="Ribose import ATP-binding protein RbsA 1">
    <location>
        <begin position="1"/>
        <end position="515"/>
    </location>
</feature>
<feature type="domain" description="ABC transporter 1" evidence="1">
    <location>
        <begin position="8"/>
        <end position="244"/>
    </location>
</feature>
<feature type="domain" description="ABC transporter 2" evidence="1">
    <location>
        <begin position="256"/>
        <end position="503"/>
    </location>
</feature>
<feature type="binding site" evidence="1">
    <location>
        <begin position="40"/>
        <end position="47"/>
    </location>
    <ligand>
        <name>ATP</name>
        <dbReference type="ChEBI" id="CHEBI:30616"/>
    </ligand>
</feature>
<protein>
    <recommendedName>
        <fullName evidence="1">Ribose import ATP-binding protein RbsA 1</fullName>
        <ecNumber evidence="1">7.5.2.7</ecNumber>
    </recommendedName>
</protein>
<sequence>MDSAVPLFQMEGISKRYGGVRALEKAELVVTSGSIHAILGENGAGKSTLIKVMAGVVAPDEGRMTLDGREVTFLSPAAANQAGIVCIFQELSLVPDLSVADNIVISDPPKRFGMIDRKAQRRVAEEALARAGAADIHPLALVKDLPLSRRQMVEIAKALARKPRILILDEATSALTAADVSKIFGVLKRLRSEGLALLYISHRMNEIAELADQCTVFRNGRNVASYKAGSKSDNEVVELMIGREYSHIFPAKPAAVPATAAPRLEARKLSWTDRLHDISLTVRAGEVVGLGGLDGQGQRELLLAFFGVLRGLSGEVLIDGKPVAIGSPAKARQDGIGMALIPEDRKTEGLMLPMTVRENLSFAALDRLSKGGIIDRAAEQRLIDDMVGLLAIKTAGLDIPVGALSGGNQQKVVIAKWLMRQPRIILLNDPTRGIDVGTKQELYQLMRKLADAGAAILFYSTDYDELIGCCDRVLVLYDGALKRELVGSEITERALIASALNIHGEESPVGLGASA</sequence>
<organism>
    <name type="scientific">Mesorhizobium japonicum (strain LMG 29417 / CECT 9101 / MAFF 303099)</name>
    <name type="common">Mesorhizobium loti (strain MAFF 303099)</name>
    <dbReference type="NCBI Taxonomy" id="266835"/>
    <lineage>
        <taxon>Bacteria</taxon>
        <taxon>Pseudomonadati</taxon>
        <taxon>Pseudomonadota</taxon>
        <taxon>Alphaproteobacteria</taxon>
        <taxon>Hyphomicrobiales</taxon>
        <taxon>Phyllobacteriaceae</taxon>
        <taxon>Mesorhizobium</taxon>
    </lineage>
</organism>
<accession>Q98K15</accession>
<evidence type="ECO:0000255" key="1">
    <source>
        <dbReference type="HAMAP-Rule" id="MF_01716"/>
    </source>
</evidence>
<name>RBSA1_RHILO</name>
<comment type="function">
    <text evidence="1">Part of the ABC transporter complex RbsABC involved in ribose import. Responsible for energy coupling to the transport system.</text>
</comment>
<comment type="catalytic activity">
    <reaction evidence="1">
        <text>D-ribose(out) + ATP + H2O = D-ribose(in) + ADP + phosphate + H(+)</text>
        <dbReference type="Rhea" id="RHEA:29903"/>
        <dbReference type="ChEBI" id="CHEBI:15377"/>
        <dbReference type="ChEBI" id="CHEBI:15378"/>
        <dbReference type="ChEBI" id="CHEBI:30616"/>
        <dbReference type="ChEBI" id="CHEBI:43474"/>
        <dbReference type="ChEBI" id="CHEBI:47013"/>
        <dbReference type="ChEBI" id="CHEBI:456216"/>
        <dbReference type="EC" id="7.5.2.7"/>
    </reaction>
</comment>
<comment type="subunit">
    <text evidence="1">The complex is composed of an ATP-binding protein (RbsA), two transmembrane proteins (RbsC) and a solute-binding protein (RbsB).</text>
</comment>
<comment type="subcellular location">
    <subcellularLocation>
        <location evidence="1">Cell inner membrane</location>
        <topology evidence="1">Peripheral membrane protein</topology>
    </subcellularLocation>
</comment>
<comment type="similarity">
    <text evidence="1">Belongs to the ABC transporter superfamily. Ribose importer (TC 3.A.1.2.1) family.</text>
</comment>
<reference key="1">
    <citation type="journal article" date="2000" name="DNA Res.">
        <title>Complete genome structure of the nitrogen-fixing symbiotic bacterium Mesorhizobium loti.</title>
        <authorList>
            <person name="Kaneko T."/>
            <person name="Nakamura Y."/>
            <person name="Sato S."/>
            <person name="Asamizu E."/>
            <person name="Kato T."/>
            <person name="Sasamoto S."/>
            <person name="Watanabe A."/>
            <person name="Idesawa K."/>
            <person name="Ishikawa A."/>
            <person name="Kawashima K."/>
            <person name="Kimura T."/>
            <person name="Kishida Y."/>
            <person name="Kiyokawa C."/>
            <person name="Kohara M."/>
            <person name="Matsumoto M."/>
            <person name="Matsuno A."/>
            <person name="Mochizuki Y."/>
            <person name="Nakayama S."/>
            <person name="Nakazaki N."/>
            <person name="Shimpo S."/>
            <person name="Sugimoto M."/>
            <person name="Takeuchi C."/>
            <person name="Yamada M."/>
            <person name="Tabata S."/>
        </authorList>
    </citation>
    <scope>NUCLEOTIDE SEQUENCE [LARGE SCALE GENOMIC DNA]</scope>
    <source>
        <strain>LMG 29417 / CECT 9101 / MAFF 303099</strain>
    </source>
</reference>
<keyword id="KW-0067">ATP-binding</keyword>
<keyword id="KW-0997">Cell inner membrane</keyword>
<keyword id="KW-1003">Cell membrane</keyword>
<keyword id="KW-0472">Membrane</keyword>
<keyword id="KW-0547">Nucleotide-binding</keyword>
<keyword id="KW-0677">Repeat</keyword>
<keyword id="KW-0762">Sugar transport</keyword>
<keyword id="KW-1278">Translocase</keyword>
<keyword id="KW-0813">Transport</keyword>